<protein>
    <recommendedName>
        <fullName>Retinal cone rhodopsin-sensitive cGMP 3',5'-cyclic phosphodiesterase subunit gamma</fullName>
        <shortName>GMP-PDE gamma</shortName>
        <ecNumber>3.1.4.35</ecNumber>
    </recommendedName>
</protein>
<proteinExistence type="inferred from homology"/>
<name>CNCG_RAT</name>
<organism>
    <name type="scientific">Rattus norvegicus</name>
    <name type="common">Rat</name>
    <dbReference type="NCBI Taxonomy" id="10116"/>
    <lineage>
        <taxon>Eukaryota</taxon>
        <taxon>Metazoa</taxon>
        <taxon>Chordata</taxon>
        <taxon>Craniata</taxon>
        <taxon>Vertebrata</taxon>
        <taxon>Euteleostomi</taxon>
        <taxon>Mammalia</taxon>
        <taxon>Eutheria</taxon>
        <taxon>Euarchontoglires</taxon>
        <taxon>Glires</taxon>
        <taxon>Rodentia</taxon>
        <taxon>Myomorpha</taxon>
        <taxon>Muroidea</taxon>
        <taxon>Muridae</taxon>
        <taxon>Murinae</taxon>
        <taxon>Rattus</taxon>
    </lineage>
</organism>
<feature type="chain" id="PRO_0000166122" description="Retinal cone rhodopsin-sensitive cGMP 3',5'-cyclic phosphodiesterase subunit gamma">
    <location>
        <begin position="1"/>
        <end position="83"/>
    </location>
</feature>
<feature type="region of interest" description="Disordered" evidence="2">
    <location>
        <begin position="1"/>
        <end position="51"/>
    </location>
</feature>
<feature type="compositionally biased region" description="Basic residues" evidence="2">
    <location>
        <begin position="22"/>
        <end position="43"/>
    </location>
</feature>
<comment type="function">
    <text evidence="1">Participates in processes of transmission and amplification of the visual signal. cGMP-PDEs are the effector molecules in G-protein-mediated phototransduction in vertebrate rods and cones (By similarity).</text>
</comment>
<comment type="catalytic activity">
    <reaction>
        <text>3',5'-cyclic GMP + H2O = GMP + H(+)</text>
        <dbReference type="Rhea" id="RHEA:16957"/>
        <dbReference type="ChEBI" id="CHEBI:15377"/>
        <dbReference type="ChEBI" id="CHEBI:15378"/>
        <dbReference type="ChEBI" id="CHEBI:57746"/>
        <dbReference type="ChEBI" id="CHEBI:58115"/>
        <dbReference type="EC" id="3.1.4.35"/>
    </reaction>
</comment>
<comment type="subunit">
    <text>Tetramer composed of two catalytic chains (alpha and beta), and two inhibitory chains (gamma).</text>
</comment>
<comment type="domain">
    <text evidence="1">The C-terminal region is important in conferring inhibition.</text>
</comment>
<comment type="similarity">
    <text evidence="3">Belongs to the rod/cone cGMP-PDE gamma subunit family.</text>
</comment>
<accession>P61250</accession>
<accession>Q9D1Y6</accession>
<accession>Q9EP63</accession>
<keyword id="KW-0140">cGMP</keyword>
<keyword id="KW-0378">Hydrolase</keyword>
<keyword id="KW-1185">Reference proteome</keyword>
<keyword id="KW-0716">Sensory transduction</keyword>
<keyword id="KW-0844">Vision</keyword>
<evidence type="ECO:0000250" key="1"/>
<evidence type="ECO:0000256" key="2">
    <source>
        <dbReference type="SAM" id="MobiDB-lite"/>
    </source>
</evidence>
<evidence type="ECO:0000305" key="3"/>
<reference key="1">
    <citation type="submission" date="1999-07" db="EMBL/GenBank/DDBJ databases">
        <title>Molecular cloning and characterization of a cone-like phosphodiesterase 6 gamma in rat testis.</title>
        <authorList>
            <person name="Tate R.J."/>
            <person name="Pyne N.J."/>
        </authorList>
    </citation>
    <scope>NUCLEOTIDE SEQUENCE [MRNA]</scope>
    <source>
        <tissue>Testis</tissue>
    </source>
</reference>
<dbReference type="EC" id="3.1.4.35"/>
<dbReference type="EMBL" id="AF169390">
    <property type="protein sequence ID" value="AAG43400.1"/>
    <property type="molecule type" value="mRNA"/>
</dbReference>
<dbReference type="RefSeq" id="NP_446140.1">
    <property type="nucleotide sequence ID" value="NM_053688.2"/>
</dbReference>
<dbReference type="RefSeq" id="XP_006237620.1">
    <property type="nucleotide sequence ID" value="XM_006237558.5"/>
</dbReference>
<dbReference type="RefSeq" id="XP_017447868.1">
    <property type="nucleotide sequence ID" value="XM_017592379.1"/>
</dbReference>
<dbReference type="RefSeq" id="XP_017447869.1">
    <property type="nucleotide sequence ID" value="XM_017592380.1"/>
</dbReference>
<dbReference type="RefSeq" id="XP_063141462.1">
    <property type="nucleotide sequence ID" value="XM_063285392.1"/>
</dbReference>
<dbReference type="SMR" id="P61250"/>
<dbReference type="FunCoup" id="P61250">
    <property type="interactions" value="18"/>
</dbReference>
<dbReference type="STRING" id="10116.ENSRNOP00000007905"/>
<dbReference type="GlyGen" id="P61250">
    <property type="glycosylation" value="1 site"/>
</dbReference>
<dbReference type="PhosphoSitePlus" id="P61250"/>
<dbReference type="PaxDb" id="10116-ENSRNOP00000007905"/>
<dbReference type="Ensembl" id="ENSRNOT00000007905.4">
    <property type="protein sequence ID" value="ENSRNOP00000007905.2"/>
    <property type="gene ID" value="ENSRNOG00000005947.5"/>
</dbReference>
<dbReference type="GeneID" id="114248"/>
<dbReference type="KEGG" id="rno:114248"/>
<dbReference type="UCSC" id="RGD:70933">
    <property type="organism name" value="rat"/>
</dbReference>
<dbReference type="AGR" id="RGD:70933"/>
<dbReference type="CTD" id="5149"/>
<dbReference type="RGD" id="70933">
    <property type="gene designation" value="Pde6h"/>
</dbReference>
<dbReference type="eggNOG" id="ENOG502S4P1">
    <property type="taxonomic scope" value="Eukaryota"/>
</dbReference>
<dbReference type="GeneTree" id="ENSGT00390000013260"/>
<dbReference type="HOGENOM" id="CLU_170469_0_0_1"/>
<dbReference type="InParanoid" id="P61250"/>
<dbReference type="OMA" id="FNVICPW"/>
<dbReference type="OrthoDB" id="1404at9989"/>
<dbReference type="PhylomeDB" id="P61250"/>
<dbReference type="TreeFam" id="TF333297"/>
<dbReference type="PRO" id="PR:P61250"/>
<dbReference type="Proteomes" id="UP000002494">
    <property type="component" value="Chromosome 4"/>
</dbReference>
<dbReference type="Bgee" id="ENSRNOG00000005947">
    <property type="expression patterns" value="Expressed in spleen and 13 other cell types or tissues"/>
</dbReference>
<dbReference type="GO" id="GO:0042622">
    <property type="term" value="C:photoreceptor outer segment membrane"/>
    <property type="evidence" value="ECO:0000318"/>
    <property type="project" value="GO_Central"/>
</dbReference>
<dbReference type="GO" id="GO:0047555">
    <property type="term" value="F:3',5'-cyclic-GMP phosphodiesterase activity"/>
    <property type="evidence" value="ECO:0007669"/>
    <property type="project" value="UniProtKB-EC"/>
</dbReference>
<dbReference type="GO" id="GO:0030553">
    <property type="term" value="F:cGMP binding"/>
    <property type="evidence" value="ECO:0007669"/>
    <property type="project" value="InterPro"/>
</dbReference>
<dbReference type="GO" id="GO:0045742">
    <property type="term" value="P:positive regulation of epidermal growth factor receptor signaling pathway"/>
    <property type="evidence" value="ECO:0000266"/>
    <property type="project" value="RGD"/>
</dbReference>
<dbReference type="GO" id="GO:0045745">
    <property type="term" value="P:positive regulation of G protein-coupled receptor signaling pathway"/>
    <property type="evidence" value="ECO:0000266"/>
    <property type="project" value="RGD"/>
</dbReference>
<dbReference type="GO" id="GO:0043410">
    <property type="term" value="P:positive regulation of MAPK cascade"/>
    <property type="evidence" value="ECO:0000266"/>
    <property type="project" value="RGD"/>
</dbReference>
<dbReference type="GO" id="GO:0007601">
    <property type="term" value="P:visual perception"/>
    <property type="evidence" value="ECO:0007669"/>
    <property type="project" value="UniProtKB-KW"/>
</dbReference>
<dbReference type="FunFam" id="4.10.1120.10:FF:000001">
    <property type="entry name" value="retinal rod rhodopsin-sensitive cGMP 3',5'-cyclic phosphodiesterase subunit gamma"/>
    <property type="match status" value="1"/>
</dbReference>
<dbReference type="Gene3D" id="4.10.1120.10">
    <property type="entry name" value="Retinal cGMP phosphodiesterase, gamma subunit"/>
    <property type="match status" value="1"/>
</dbReference>
<dbReference type="InterPro" id="IPR006952">
    <property type="entry name" value="PDE6_gamma"/>
</dbReference>
<dbReference type="InterPro" id="IPR037030">
    <property type="entry name" value="PDE6_gamma_sf"/>
</dbReference>
<dbReference type="PANTHER" id="PTHR12122">
    <property type="entry name" value="RETINAL CONE RHODOPSIN-SENSITIVE CGMP 3',5'-CYCLIC PHOSPHODIESTERASE GAMMA-SUBUNIT-RELATED"/>
    <property type="match status" value="1"/>
</dbReference>
<dbReference type="PANTHER" id="PTHR12122:SF5">
    <property type="entry name" value="RETINAL CONE RHODOPSIN-SENSITIVE CGMP 3',5'-CYCLIC PHOSPHODIESTERASE SUBUNIT GAMMA"/>
    <property type="match status" value="1"/>
</dbReference>
<dbReference type="Pfam" id="PF04868">
    <property type="entry name" value="PDE6_gamma"/>
    <property type="match status" value="1"/>
</dbReference>
<dbReference type="PIRSF" id="PIRSF000969">
    <property type="entry name" value="35-cGMP_Pdiase_g"/>
    <property type="match status" value="1"/>
</dbReference>
<gene>
    <name type="primary">Pde6h</name>
</gene>
<sequence length="83" mass="9044">MSDSPCLSPPAPSQGPTTPRKGPPKFKQRQTRQFKSKPPKKGVKGFGDDIPGMEGLGTDITVICPWEAFSHLELHELAQFGII</sequence>